<organism>
    <name type="scientific">Crotalus atrox</name>
    <name type="common">Western diamondback rattlesnake</name>
    <dbReference type="NCBI Taxonomy" id="8730"/>
    <lineage>
        <taxon>Eukaryota</taxon>
        <taxon>Metazoa</taxon>
        <taxon>Chordata</taxon>
        <taxon>Craniata</taxon>
        <taxon>Vertebrata</taxon>
        <taxon>Euteleostomi</taxon>
        <taxon>Lepidosauria</taxon>
        <taxon>Squamata</taxon>
        <taxon>Bifurcata</taxon>
        <taxon>Unidentata</taxon>
        <taxon>Episquamata</taxon>
        <taxon>Toxicofera</taxon>
        <taxon>Serpentes</taxon>
        <taxon>Colubroidea</taxon>
        <taxon>Viperidae</taxon>
        <taxon>Crotalinae</taxon>
        <taxon>Crotalus</taxon>
    </lineage>
</organism>
<name>VM1AD_CROAT</name>
<keyword id="KW-0002">3D-structure</keyword>
<keyword id="KW-0106">Calcium</keyword>
<keyword id="KW-0177">Collagen degradation</keyword>
<keyword id="KW-0903">Direct protein sequencing</keyword>
<keyword id="KW-1015">Disulfide bond</keyword>
<keyword id="KW-1200">Hemorrhagic toxin</keyword>
<keyword id="KW-1199">Hemostasis impairing toxin</keyword>
<keyword id="KW-0378">Hydrolase</keyword>
<keyword id="KW-0479">Metal-binding</keyword>
<keyword id="KW-0482">Metalloprotease</keyword>
<keyword id="KW-0645">Protease</keyword>
<keyword id="KW-0873">Pyrrolidone carboxylic acid</keyword>
<keyword id="KW-0964">Secreted</keyword>
<keyword id="KW-0732">Signal</keyword>
<keyword id="KW-0800">Toxin</keyword>
<keyword id="KW-0862">Zinc</keyword>
<keyword id="KW-0865">Zymogen</keyword>
<protein>
    <recommendedName>
        <fullName>Snake venom metalloproteinase atrolysin-D</fullName>
        <shortName>SVMP</shortName>
        <ecNumber>3.4.24.42</ecNumber>
    </recommendedName>
    <alternativeName>
        <fullName>Hemorrhagic metalloproteinase atrolysin D</fullName>
    </alternativeName>
    <alternativeName>
        <fullName>Hemorrhagic toxin D</fullName>
        <shortName>HT-D</shortName>
    </alternativeName>
</protein>
<comment type="function">
    <text evidence="5">Snake venom zinc metalloproteinase that causes hemorrhage by provoking the degradation of the sub-endothelial matrix proteins (fibronectin, laminin, type IV collagen, nidogen, and gelatins).</text>
</comment>
<comment type="catalytic activity">
    <reaction>
        <text>Cleavage of 5-His-|-Leu-6, 10-His-|-Leu-11, 14-Ala-|-Leu-15, 16-Tyr-|-Leu-17 and 23-Gly-|-Phe-24 of insulin B chain. With small molecule substrates prefers hydrophobic residue at P2' and small residue such as Ala, Gly at P1.</text>
        <dbReference type="EC" id="3.4.24.42"/>
    </reaction>
</comment>
<comment type="cofactor">
    <cofactor evidence="1">
        <name>Zn(2+)</name>
        <dbReference type="ChEBI" id="CHEBI:29105"/>
    </cofactor>
    <text evidence="1">Binds 1 zinc ion per subunit.</text>
</comment>
<comment type="subunit">
    <text evidence="1">Monomer.</text>
</comment>
<comment type="subcellular location">
    <subcellularLocation>
        <location>Secreted</location>
    </subcellularLocation>
</comment>
<comment type="tissue specificity">
    <text>Expressed by the venom gland.</text>
</comment>
<comment type="PTM">
    <text>The N-terminus is blocked.</text>
</comment>
<comment type="similarity">
    <text evidence="6">Belongs to the venom metalloproteinase (M12B) family. P-I subfamily.</text>
</comment>
<evidence type="ECO:0000250" key="1"/>
<evidence type="ECO:0000255" key="2"/>
<evidence type="ECO:0000255" key="3">
    <source>
        <dbReference type="PROSITE-ProRule" id="PRU00276"/>
    </source>
</evidence>
<evidence type="ECO:0000269" key="4">
    <source>
    </source>
</evidence>
<evidence type="ECO:0000269" key="5">
    <source>
    </source>
</evidence>
<evidence type="ECO:0000305" key="6"/>
<evidence type="ECO:0007829" key="7">
    <source>
        <dbReference type="PDB" id="1ATL"/>
    </source>
</evidence>
<evidence type="ECO:0007829" key="8">
    <source>
        <dbReference type="PDB" id="1DTH"/>
    </source>
</evidence>
<dbReference type="EC" id="3.4.24.42"/>
<dbReference type="EMBL" id="U01237">
    <property type="protein sequence ID" value="AAA03352.1"/>
    <property type="molecule type" value="mRNA"/>
</dbReference>
<dbReference type="PIR" id="S41610">
    <property type="entry name" value="HYRSAC"/>
</dbReference>
<dbReference type="PDB" id="1ATL">
    <property type="method" value="X-ray"/>
    <property type="resolution" value="1.80 A"/>
    <property type="chains" value="A/B=192-393"/>
</dbReference>
<dbReference type="PDB" id="1DTH">
    <property type="method" value="X-ray"/>
    <property type="resolution" value="2.00 A"/>
    <property type="chains" value="A/B=191-393"/>
</dbReference>
<dbReference type="PDB" id="1HTD">
    <property type="method" value="X-ray"/>
    <property type="resolution" value="2.10 A"/>
    <property type="chains" value="A/B=192-393"/>
</dbReference>
<dbReference type="PDBsum" id="1ATL"/>
<dbReference type="PDBsum" id="1DTH"/>
<dbReference type="PDBsum" id="1HTD"/>
<dbReference type="SMR" id="P15167"/>
<dbReference type="MEROPS" id="M12.144"/>
<dbReference type="KEGG" id="ag:AAA03352"/>
<dbReference type="BRENDA" id="3.4.24.42">
    <property type="organism ID" value="1710"/>
</dbReference>
<dbReference type="EvolutionaryTrace" id="P15167"/>
<dbReference type="GO" id="GO:0005576">
    <property type="term" value="C:extracellular region"/>
    <property type="evidence" value="ECO:0007669"/>
    <property type="project" value="UniProtKB-SubCell"/>
</dbReference>
<dbReference type="GO" id="GO:0005886">
    <property type="term" value="C:plasma membrane"/>
    <property type="evidence" value="ECO:0007669"/>
    <property type="project" value="TreeGrafter"/>
</dbReference>
<dbReference type="GO" id="GO:0046872">
    <property type="term" value="F:metal ion binding"/>
    <property type="evidence" value="ECO:0007669"/>
    <property type="project" value="UniProtKB-KW"/>
</dbReference>
<dbReference type="GO" id="GO:0004222">
    <property type="term" value="F:metalloendopeptidase activity"/>
    <property type="evidence" value="ECO:0007669"/>
    <property type="project" value="InterPro"/>
</dbReference>
<dbReference type="GO" id="GO:0090729">
    <property type="term" value="F:toxin activity"/>
    <property type="evidence" value="ECO:0007669"/>
    <property type="project" value="UniProtKB-KW"/>
</dbReference>
<dbReference type="GO" id="GO:0030574">
    <property type="term" value="P:collagen catabolic process"/>
    <property type="evidence" value="ECO:0007669"/>
    <property type="project" value="UniProtKB-KW"/>
</dbReference>
<dbReference type="GO" id="GO:0006508">
    <property type="term" value="P:proteolysis"/>
    <property type="evidence" value="ECO:0007669"/>
    <property type="project" value="UniProtKB-KW"/>
</dbReference>
<dbReference type="CDD" id="cd04269">
    <property type="entry name" value="ZnMc_adamalysin_II_like"/>
    <property type="match status" value="1"/>
</dbReference>
<dbReference type="FunFam" id="3.40.390.10:FF:000002">
    <property type="entry name" value="Disintegrin and metalloproteinase domain-containing protein 22"/>
    <property type="match status" value="1"/>
</dbReference>
<dbReference type="Gene3D" id="3.40.390.10">
    <property type="entry name" value="Collagenase (Catalytic Domain)"/>
    <property type="match status" value="1"/>
</dbReference>
<dbReference type="InterPro" id="IPR024079">
    <property type="entry name" value="MetalloPept_cat_dom_sf"/>
</dbReference>
<dbReference type="InterPro" id="IPR001590">
    <property type="entry name" value="Peptidase_M12B"/>
</dbReference>
<dbReference type="InterPro" id="IPR002870">
    <property type="entry name" value="Peptidase_M12B_N"/>
</dbReference>
<dbReference type="InterPro" id="IPR034027">
    <property type="entry name" value="Reprolysin_adamalysin"/>
</dbReference>
<dbReference type="PANTHER" id="PTHR11905">
    <property type="entry name" value="ADAM A DISINTEGRIN AND METALLOPROTEASE DOMAIN"/>
    <property type="match status" value="1"/>
</dbReference>
<dbReference type="PANTHER" id="PTHR11905:SF32">
    <property type="entry name" value="DISINTEGRIN AND METALLOPROTEINASE DOMAIN-CONTAINING PROTEIN 28"/>
    <property type="match status" value="1"/>
</dbReference>
<dbReference type="Pfam" id="PF01562">
    <property type="entry name" value="Pep_M12B_propep"/>
    <property type="match status" value="1"/>
</dbReference>
<dbReference type="Pfam" id="PF01421">
    <property type="entry name" value="Reprolysin"/>
    <property type="match status" value="1"/>
</dbReference>
<dbReference type="SUPFAM" id="SSF55486">
    <property type="entry name" value="Metalloproteases ('zincins'), catalytic domain"/>
    <property type="match status" value="1"/>
</dbReference>
<dbReference type="PROSITE" id="PS50215">
    <property type="entry name" value="ADAM_MEPRO"/>
    <property type="match status" value="1"/>
</dbReference>
<dbReference type="PROSITE" id="PS00142">
    <property type="entry name" value="ZINC_PROTEASE"/>
    <property type="match status" value="1"/>
</dbReference>
<reference key="1">
    <citation type="journal article" date="1994" name="Arch. Biochem. Biophys.">
        <title>cDNA sequences for four snake venom metalloproteinases: structure, classification, and their relationship to mammalian reproductive proteins.</title>
        <authorList>
            <person name="Hite L.A."/>
            <person name="Jia L.-G."/>
            <person name="Bjarnason J.B."/>
            <person name="Fox J.W."/>
        </authorList>
    </citation>
    <scope>NUCLEOTIDE SEQUENCE [MRNA]</scope>
    <source>
        <tissue>Venom gland</tissue>
    </source>
</reference>
<reference key="2">
    <citation type="journal article" date="1989" name="J. Biol. Chem.">
        <title>Amino acid sequence of a Crotalus atrox venom metalloproteinase which cleaves type IV collagen and gelatin.</title>
        <authorList>
            <person name="Shannon J.D."/>
            <person name="Baramova E.N."/>
            <person name="Bjarnason J.B."/>
            <person name="Fox J.W."/>
        </authorList>
    </citation>
    <scope>PROTEIN SEQUENCE OF 191-393</scope>
    <scope>PYROGLUTAMATE FORMATION AT GLN-191</scope>
    <source>
        <tissue>Venom</tissue>
    </source>
</reference>
<reference key="3">
    <citation type="journal article" date="1987" name="Biochim. Biophys. Acta">
        <title>Characterization of two hemorrhagic zinc proteinases, toxin c and toxin d, from western diamondback rattlesnake (Crotalus atrox) venom.</title>
        <authorList>
            <person name="Bjarnason J.B."/>
            <person name="Fox J.W."/>
        </authorList>
    </citation>
    <scope>PROTEIN SEQUENCE OF 367-379</scope>
</reference>
<reference key="4">
    <citation type="journal article" date="2009" name="J. Proteome Res.">
        <title>Exploring the venom proteome of the western diamondback rattlesnake, Crotalus atrox, via snake venomics and combinatorial peptide ligand library approaches.</title>
        <authorList>
            <person name="Calvete J.J."/>
            <person name="Fasoli E."/>
            <person name="Sanz L."/>
            <person name="Boschetti E."/>
            <person name="Righetti P.G."/>
        </authorList>
    </citation>
    <scope>PROTEIN SEQUENCE OF 188-197 AND 224-236</scope>
    <scope>IDENTIFICATION BY MASS SPECTROMETRY</scope>
    <source>
        <tissue>Venom</tissue>
    </source>
</reference>
<reference key="5">
    <citation type="journal article" date="1989" name="Arch. Biochem. Biophys.">
        <title>Degradation of extracellular matrix proteins by hemorrhagic metalloproteinases.</title>
        <authorList>
            <person name="Baramova E.N."/>
            <person name="Shannon J.D."/>
            <person name="Bjarnason J.B."/>
            <person name="Fox J.W."/>
        </authorList>
    </citation>
    <scope>FUNCTION</scope>
</reference>
<reference key="6">
    <citation type="journal article" date="1994" name="Proc. Natl. Acad. Sci. U.S.A.">
        <title>Structural interaction of natural and synthetic inhibitors with the venom metalloproteinase, atrolysin C (form d).</title>
        <authorList>
            <person name="Zhang D."/>
            <person name="Botos I."/>
            <person name="Gomis-Rueth F.-X."/>
            <person name="Doll R."/>
            <person name="Blood C."/>
            <person name="Njoroge F.G."/>
            <person name="Fox J.W."/>
            <person name="Bode W."/>
            <person name="Meyer E.F."/>
        </authorList>
    </citation>
    <scope>X-RAY CRYSTALLOGRAPHY (1.8 ANGSTROMS) OF 191-393 IN COMPLEX WITH ZINC ION AND CALCIUM ION</scope>
    <scope>METAL-BINDING SITES</scope>
    <scope>DISULFIDE BONDS</scope>
    <source>
        <tissue>Venom</tissue>
    </source>
</reference>
<reference key="7">
    <citation type="journal article" date="1996" name="Proc. Natl. Acad. Sci. U.S.A.">
        <title>Batimastat, a potent matrix metalloproteinase inhibitor, exhibits an unexpected mode of binding.</title>
        <authorList>
            <person name="Botos I."/>
            <person name="Scapozza L."/>
            <person name="Zhang D."/>
            <person name="Liotta L.A."/>
            <person name="Meyer E.F."/>
        </authorList>
    </citation>
    <scope>X-RAY CRYSTALLOGRAPHY (2.0 ANGSTROMS) OF 191-393 IN COMPLEX WITH ZINC ION AND CALCIUM ION</scope>
    <scope>DISULFIDE BONDS</scope>
    <scope>METAL-BINDING SITES</scope>
</reference>
<accession>P15167</accession>
<proteinExistence type="evidence at protein level"/>
<feature type="signal peptide" evidence="2">
    <location>
        <begin position="1"/>
        <end position="20"/>
    </location>
</feature>
<feature type="propeptide" id="PRO_0000029000" evidence="4">
    <location>
        <begin position="21"/>
        <end position="190"/>
    </location>
</feature>
<feature type="chain" id="PRO_0000029001" description="Snake venom metalloproteinase atrolysin-D">
    <location>
        <begin position="191"/>
        <end position="393"/>
    </location>
</feature>
<feature type="propeptide" id="PRO_0000029002">
    <location>
        <begin position="394"/>
        <end position="414"/>
    </location>
</feature>
<feature type="domain" description="Peptidase M12B" evidence="3">
    <location>
        <begin position="197"/>
        <end position="393"/>
    </location>
</feature>
<feature type="active site">
    <location>
        <position position="334"/>
    </location>
</feature>
<feature type="binding site">
    <location>
        <position position="200"/>
    </location>
    <ligand>
        <name>Ca(2+)</name>
        <dbReference type="ChEBI" id="CHEBI:29108"/>
    </ligand>
</feature>
<feature type="binding site">
    <location>
        <position position="284"/>
    </location>
    <ligand>
        <name>Ca(2+)</name>
        <dbReference type="ChEBI" id="CHEBI:29108"/>
    </ligand>
</feature>
<feature type="binding site">
    <location>
        <position position="333"/>
    </location>
    <ligand>
        <name>Zn(2+)</name>
        <dbReference type="ChEBI" id="CHEBI:29105"/>
        <note>catalytic</note>
    </ligand>
</feature>
<feature type="binding site">
    <location>
        <position position="337"/>
    </location>
    <ligand>
        <name>Zn(2+)</name>
        <dbReference type="ChEBI" id="CHEBI:29105"/>
        <note>catalytic</note>
    </ligand>
</feature>
<feature type="binding site">
    <location>
        <position position="343"/>
    </location>
    <ligand>
        <name>Zn(2+)</name>
        <dbReference type="ChEBI" id="CHEBI:29105"/>
        <note>catalytic</note>
    </ligand>
</feature>
<feature type="binding site">
    <location>
        <position position="388"/>
    </location>
    <ligand>
        <name>Ca(2+)</name>
        <dbReference type="ChEBI" id="CHEBI:29108"/>
    </ligand>
</feature>
<feature type="binding site">
    <location>
        <position position="391"/>
    </location>
    <ligand>
        <name>Ca(2+)</name>
        <dbReference type="ChEBI" id="CHEBI:29108"/>
    </ligand>
</feature>
<feature type="modified residue" description="Pyrrolidone carboxylic acid" evidence="4">
    <location>
        <position position="191"/>
    </location>
</feature>
<feature type="disulfide bond" evidence="3 4">
    <location>
        <begin position="308"/>
        <end position="388"/>
    </location>
</feature>
<feature type="disulfide bond" evidence="3 4">
    <location>
        <begin position="348"/>
        <end position="355"/>
    </location>
</feature>
<feature type="sequence variant" description="In some chains.">
    <location>
        <position position="191"/>
    </location>
</feature>
<feature type="strand" evidence="7">
    <location>
        <begin position="197"/>
        <end position="205"/>
    </location>
</feature>
<feature type="helix" evidence="7">
    <location>
        <begin position="207"/>
        <end position="212"/>
    </location>
</feature>
<feature type="turn" evidence="7">
    <location>
        <begin position="213"/>
        <end position="215"/>
    </location>
</feature>
<feature type="helix" evidence="7">
    <location>
        <begin position="217"/>
        <end position="235"/>
    </location>
</feature>
<feature type="helix" evidence="7">
    <location>
        <begin position="236"/>
        <end position="238"/>
    </location>
</feature>
<feature type="strand" evidence="7">
    <location>
        <begin position="240"/>
        <end position="249"/>
    </location>
</feature>
<feature type="helix" evidence="7">
    <location>
        <begin position="262"/>
        <end position="275"/>
    </location>
</feature>
<feature type="helix" evidence="7">
    <location>
        <begin position="277"/>
        <end position="280"/>
    </location>
</feature>
<feature type="strand" evidence="7">
    <location>
        <begin position="284"/>
        <end position="290"/>
    </location>
</feature>
<feature type="strand" evidence="7">
    <location>
        <begin position="295"/>
        <end position="297"/>
    </location>
</feature>
<feature type="turn" evidence="7">
    <location>
        <begin position="310"/>
        <end position="312"/>
    </location>
</feature>
<feature type="strand" evidence="7">
    <location>
        <begin position="313"/>
        <end position="318"/>
    </location>
</feature>
<feature type="helix" evidence="7">
    <location>
        <begin position="324"/>
        <end position="338"/>
    </location>
</feature>
<feature type="strand" evidence="7">
    <location>
        <begin position="353"/>
        <end position="355"/>
    </location>
</feature>
<feature type="strand" evidence="8">
    <location>
        <begin position="358"/>
        <end position="360"/>
    </location>
</feature>
<feature type="helix" evidence="7">
    <location>
        <begin position="371"/>
        <end position="384"/>
    </location>
</feature>
<feature type="helix" evidence="7">
    <location>
        <begin position="388"/>
        <end position="390"/>
    </location>
</feature>
<sequence length="414" mass="46845">MIEVLLVTICLAVFPYQGSSIILESGNVNDYEVVYPRKVTALPKGAVQPKYEDAMQYELKVNGEPVVLHLEKNKELFSKDYSETHYSPDGRKITTNPSVEDHCYYRGRIENDADSTASISACNGLKGHFKLQGEMYLIEPLELSDSEAHAVFKLENVEKEDEAPKMCGVTQNWESYEPIKKASDLNLNPDQQNLPQRYIELVVVADHRVFMKYNSDLNTIRTRVHEIVNFINGFYRSLNIHVSLTDLEIWSNEDQINIQSASSDTLNAFAEWRETDLLNRKSHDNAQLLTAIELDEETLGLAPLGTMCDPKLSIGIVQDHSPINLLMGVTMAHELGHNLGMEHDGKDCLRGASLCIMRPGLTKGRSYEFSDDSMHYYERFLKQYKPQCILNKPLRIDPVSTPVSGNELLEAGEE</sequence>